<accession>Q80VM4</accession>
<sequence>MDPQPPPPAQGSPPHRDRGRGRGRGRGRGRGRGRGRGGAGAPRAPLPCPTCGRLFRFPYYLSRHRLSHSGLRPHACPLCPKAFRRPAHLSRHLRGHGPQPPLRCAACPRTFPEPAQLRRHLAQEHAGSEVDLSTQRAVKEEPEASWGPQDEGVEQPATVVVAGAEEEATTQWPAGDSAPAAVPTSTDPRESEAKEAEAGAAELRAELALAAGRQEEKQVLLQADWTLLCLRCREAFATKGELKAHPCLRPEGEQEGEGGPPPRPKRHQCSICLKAFARPWSLSRHRLVHSTDRPFVCPDCGLAFRLASYLRQHRRVHGPLSLLAPLPGAGKKDDKASGGRNSGKGPEGGEGAECGGASEGGEGGHNGGDATPARPPAGEPRFWCPECGKGFRRRAHLRQHGVTHSGARPFQCVRCQREFKRLADLARHAQVHAGGPAPHPCPRCPRRFSRAYSLLRHQRCHRAELERAELERAAALQELQTQASQSPQPPQPLKQEAEGLPLPIAHIKEEPPSPGTPPQSPPAPPVFLSASCFDSQDHSAFEMEDEEMDSKAHLCGLGGLAS</sequence>
<keyword id="KW-0903">Direct protein sequencing</keyword>
<keyword id="KW-0238">DNA-binding</keyword>
<keyword id="KW-0479">Metal-binding</keyword>
<keyword id="KW-0488">Methylation</keyword>
<keyword id="KW-0539">Nucleus</keyword>
<keyword id="KW-0597">Phosphoprotein</keyword>
<keyword id="KW-1185">Reference proteome</keyword>
<keyword id="KW-0677">Repeat</keyword>
<keyword id="KW-0804">Transcription</keyword>
<keyword id="KW-0805">Transcription regulation</keyword>
<keyword id="KW-0862">Zinc</keyword>
<keyword id="KW-0863">Zinc-finger</keyword>
<evidence type="ECO:0000250" key="1">
    <source>
        <dbReference type="UniProtKB" id="Q8NAF0"/>
    </source>
</evidence>
<evidence type="ECO:0000255" key="2">
    <source>
        <dbReference type="PROSITE-ProRule" id="PRU00042"/>
    </source>
</evidence>
<evidence type="ECO:0000256" key="3">
    <source>
        <dbReference type="SAM" id="MobiDB-lite"/>
    </source>
</evidence>
<evidence type="ECO:0000305" key="4"/>
<evidence type="ECO:0007744" key="5">
    <source>
    </source>
</evidence>
<feature type="chain" id="PRO_0000047670" description="Zinc finger protein 579">
    <location>
        <begin position="1"/>
        <end position="562"/>
    </location>
</feature>
<feature type="zinc finger region" description="C2H2-type 1" evidence="2">
    <location>
        <begin position="46"/>
        <end position="68"/>
    </location>
</feature>
<feature type="zinc finger region" description="C2H2-type 2" evidence="2">
    <location>
        <begin position="74"/>
        <end position="96"/>
    </location>
</feature>
<feature type="zinc finger region" description="C2H2-type 3" evidence="2">
    <location>
        <begin position="102"/>
        <end position="125"/>
    </location>
</feature>
<feature type="zinc finger region" description="C2H2-type 4" evidence="2">
    <location>
        <begin position="267"/>
        <end position="289"/>
    </location>
</feature>
<feature type="zinc finger region" description="C2H2-type 5" evidence="2">
    <location>
        <begin position="295"/>
        <end position="317"/>
    </location>
</feature>
<feature type="zinc finger region" description="C2H2-type 6" evidence="2">
    <location>
        <begin position="382"/>
        <end position="404"/>
    </location>
</feature>
<feature type="zinc finger region" description="C2H2-type 7" evidence="2">
    <location>
        <begin position="410"/>
        <end position="432"/>
    </location>
</feature>
<feature type="zinc finger region" description="C2H2-type 8" evidence="2">
    <location>
        <begin position="439"/>
        <end position="461"/>
    </location>
</feature>
<feature type="region of interest" description="Disordered" evidence="3">
    <location>
        <begin position="1"/>
        <end position="45"/>
    </location>
</feature>
<feature type="region of interest" description="Disordered" evidence="3">
    <location>
        <begin position="120"/>
        <end position="154"/>
    </location>
</feature>
<feature type="region of interest" description="Disordered" evidence="3">
    <location>
        <begin position="166"/>
        <end position="199"/>
    </location>
</feature>
<feature type="region of interest" description="Disordered" evidence="3">
    <location>
        <begin position="321"/>
        <end position="377"/>
    </location>
</feature>
<feature type="region of interest" description="Disordered" evidence="3">
    <location>
        <begin position="505"/>
        <end position="530"/>
    </location>
</feature>
<feature type="compositionally biased region" description="Pro residues" evidence="3">
    <location>
        <begin position="1"/>
        <end position="11"/>
    </location>
</feature>
<feature type="compositionally biased region" description="Basic residues" evidence="3">
    <location>
        <begin position="17"/>
        <end position="35"/>
    </location>
</feature>
<feature type="compositionally biased region" description="Basic and acidic residues" evidence="3">
    <location>
        <begin position="187"/>
        <end position="197"/>
    </location>
</feature>
<feature type="compositionally biased region" description="Gly residues" evidence="3">
    <location>
        <begin position="340"/>
        <end position="367"/>
    </location>
</feature>
<feature type="compositionally biased region" description="Pro residues" evidence="3">
    <location>
        <begin position="512"/>
        <end position="525"/>
    </location>
</feature>
<feature type="modified residue" description="Omega-N-methylarginine" evidence="5">
    <location>
        <position position="94"/>
    </location>
</feature>
<feature type="modified residue" description="Phosphoserine" evidence="1">
    <location>
        <position position="191"/>
    </location>
</feature>
<feature type="modified residue" description="Phosphoserine" evidence="1">
    <location>
        <position position="486"/>
    </location>
</feature>
<protein>
    <recommendedName>
        <fullName>Zinc finger protein 579</fullName>
    </recommendedName>
</protein>
<gene>
    <name type="primary">Znf579</name>
    <name type="synonym">Zfp579</name>
</gene>
<organism>
    <name type="scientific">Mus musculus</name>
    <name type="common">Mouse</name>
    <dbReference type="NCBI Taxonomy" id="10090"/>
    <lineage>
        <taxon>Eukaryota</taxon>
        <taxon>Metazoa</taxon>
        <taxon>Chordata</taxon>
        <taxon>Craniata</taxon>
        <taxon>Vertebrata</taxon>
        <taxon>Euteleostomi</taxon>
        <taxon>Mammalia</taxon>
        <taxon>Eutheria</taxon>
        <taxon>Euarchontoglires</taxon>
        <taxon>Glires</taxon>
        <taxon>Rodentia</taxon>
        <taxon>Myomorpha</taxon>
        <taxon>Muroidea</taxon>
        <taxon>Muridae</taxon>
        <taxon>Murinae</taxon>
        <taxon>Mus</taxon>
        <taxon>Mus</taxon>
    </lineage>
</organism>
<proteinExistence type="evidence at protein level"/>
<name>ZN579_MOUSE</name>
<comment type="function">
    <text>May be involved in transcriptional regulation.</text>
</comment>
<comment type="subcellular location">
    <subcellularLocation>
        <location evidence="4">Nucleus</location>
    </subcellularLocation>
</comment>
<comment type="similarity">
    <text evidence="4">Belongs to the krueppel C2H2-type zinc-finger protein family.</text>
</comment>
<reference key="1">
    <citation type="journal article" date="2004" name="Genome Res.">
        <title>The status, quality, and expansion of the NIH full-length cDNA project: the Mammalian Gene Collection (MGC).</title>
        <authorList>
            <consortium name="The MGC Project Team"/>
        </authorList>
    </citation>
    <scope>NUCLEOTIDE SEQUENCE [LARGE SCALE MRNA]</scope>
    <source>
        <tissue>Olfactory epithelium</tissue>
    </source>
</reference>
<reference key="2">
    <citation type="submission" date="2009-01" db="UniProtKB">
        <authorList>
            <person name="Lubec G."/>
            <person name="Sunyer B."/>
            <person name="Chen W.-Q."/>
        </authorList>
    </citation>
    <scope>PROTEIN SEQUENCE OF 422-427</scope>
    <scope>IDENTIFICATION BY MASS SPECTROMETRY</scope>
    <source>
        <strain>OF1</strain>
        <tissue>Hippocampus</tissue>
    </source>
</reference>
<reference key="3">
    <citation type="journal article" date="2014" name="Mol. Cell. Proteomics">
        <title>Immunoaffinity enrichment and mass spectrometry analysis of protein methylation.</title>
        <authorList>
            <person name="Guo A."/>
            <person name="Gu H."/>
            <person name="Zhou J."/>
            <person name="Mulhern D."/>
            <person name="Wang Y."/>
            <person name="Lee K.A."/>
            <person name="Yang V."/>
            <person name="Aguiar M."/>
            <person name="Kornhauser J."/>
            <person name="Jia X."/>
            <person name="Ren J."/>
            <person name="Beausoleil S.A."/>
            <person name="Silva J.C."/>
            <person name="Vemulapalli V."/>
            <person name="Bedford M.T."/>
            <person name="Comb M.J."/>
        </authorList>
    </citation>
    <scope>METHYLATION [LARGE SCALE ANALYSIS] AT ARG-94</scope>
    <scope>IDENTIFICATION BY MASS SPECTROMETRY [LARGE SCALE ANALYSIS]</scope>
    <source>
        <tissue>Embryo</tissue>
    </source>
</reference>
<dbReference type="EMBL" id="BC048385">
    <property type="protein sequence ID" value="AAH48385.1"/>
    <property type="molecule type" value="mRNA"/>
</dbReference>
<dbReference type="CCDS" id="CCDS39744.1"/>
<dbReference type="RefSeq" id="NP_081017.1">
    <property type="nucleotide sequence ID" value="NM_026741.2"/>
</dbReference>
<dbReference type="RefSeq" id="XP_006540398.1">
    <property type="nucleotide sequence ID" value="XM_006540335.3"/>
</dbReference>
<dbReference type="FunCoup" id="Q80VM4">
    <property type="interactions" value="65"/>
</dbReference>
<dbReference type="STRING" id="10090.ENSMUSP00000123963"/>
<dbReference type="GlyGen" id="Q80VM4">
    <property type="glycosylation" value="3 sites"/>
</dbReference>
<dbReference type="iPTMnet" id="Q80VM4"/>
<dbReference type="PhosphoSitePlus" id="Q80VM4"/>
<dbReference type="jPOST" id="Q80VM4"/>
<dbReference type="PaxDb" id="10090-ENSMUSP00000123963"/>
<dbReference type="ProteomicsDB" id="302091"/>
<dbReference type="Antibodypedia" id="33125">
    <property type="antibodies" value="46 antibodies from 13 providers"/>
</dbReference>
<dbReference type="DNASU" id="68490"/>
<dbReference type="Ensembl" id="ENSMUST00000108572.2">
    <property type="protein sequence ID" value="ENSMUSP00000104212.2"/>
    <property type="gene ID" value="ENSMUSG00000051550.11"/>
</dbReference>
<dbReference type="Ensembl" id="ENSMUST00000162731.2">
    <property type="protein sequence ID" value="ENSMUSP00000123963.2"/>
    <property type="gene ID" value="ENSMUSG00000051550.11"/>
</dbReference>
<dbReference type="GeneID" id="68490"/>
<dbReference type="KEGG" id="mmu:68490"/>
<dbReference type="UCSC" id="uc009ezc.1">
    <property type="organism name" value="mouse"/>
</dbReference>
<dbReference type="AGR" id="MGI:1915740"/>
<dbReference type="CTD" id="68490"/>
<dbReference type="MGI" id="MGI:1915740">
    <property type="gene designation" value="Zfp579"/>
</dbReference>
<dbReference type="VEuPathDB" id="HostDB:ENSMUSG00000051550"/>
<dbReference type="eggNOG" id="KOG1721">
    <property type="taxonomic scope" value="Eukaryota"/>
</dbReference>
<dbReference type="GeneTree" id="ENSGT00930000151080"/>
<dbReference type="HOGENOM" id="CLU_487114_0_0_1"/>
<dbReference type="InParanoid" id="Q80VM4"/>
<dbReference type="OMA" id="SPRYTHW"/>
<dbReference type="OrthoDB" id="10004641at2759"/>
<dbReference type="PhylomeDB" id="Q80VM4"/>
<dbReference type="TreeFam" id="TF331849"/>
<dbReference type="BioGRID-ORCS" id="68490">
    <property type="hits" value="3 hits in 78 CRISPR screens"/>
</dbReference>
<dbReference type="ChiTaRS" id="Zfp579">
    <property type="organism name" value="mouse"/>
</dbReference>
<dbReference type="PRO" id="PR:Q80VM4"/>
<dbReference type="Proteomes" id="UP000000589">
    <property type="component" value="Chromosome 7"/>
</dbReference>
<dbReference type="RNAct" id="Q80VM4">
    <property type="molecule type" value="protein"/>
</dbReference>
<dbReference type="Bgee" id="ENSMUSG00000051550">
    <property type="expression patterns" value="Expressed in ear vesicle and 205 other cell types or tissues"/>
</dbReference>
<dbReference type="ExpressionAtlas" id="Q80VM4">
    <property type="expression patterns" value="baseline and differential"/>
</dbReference>
<dbReference type="GO" id="GO:0005634">
    <property type="term" value="C:nucleus"/>
    <property type="evidence" value="ECO:0007669"/>
    <property type="project" value="UniProtKB-SubCell"/>
</dbReference>
<dbReference type="GO" id="GO:0000981">
    <property type="term" value="F:DNA-binding transcription factor activity, RNA polymerase II-specific"/>
    <property type="evidence" value="ECO:0007669"/>
    <property type="project" value="Ensembl"/>
</dbReference>
<dbReference type="GO" id="GO:0000976">
    <property type="term" value="F:transcription cis-regulatory region binding"/>
    <property type="evidence" value="ECO:0007669"/>
    <property type="project" value="Ensembl"/>
</dbReference>
<dbReference type="GO" id="GO:0008270">
    <property type="term" value="F:zinc ion binding"/>
    <property type="evidence" value="ECO:0007669"/>
    <property type="project" value="UniProtKB-KW"/>
</dbReference>
<dbReference type="FunFam" id="3.30.160.60:FF:000111">
    <property type="entry name" value="GLI family zinc finger 4"/>
    <property type="match status" value="1"/>
</dbReference>
<dbReference type="FunFam" id="3.30.160.60:FF:000045">
    <property type="entry name" value="ZFP69 zinc finger protein B"/>
    <property type="match status" value="1"/>
</dbReference>
<dbReference type="FunFam" id="3.30.160.60:FF:000344">
    <property type="entry name" value="zinc finger protein 90 homolog"/>
    <property type="match status" value="1"/>
</dbReference>
<dbReference type="Gene3D" id="3.30.160.60">
    <property type="entry name" value="Classic Zinc Finger"/>
    <property type="match status" value="7"/>
</dbReference>
<dbReference type="InterPro" id="IPR036236">
    <property type="entry name" value="Znf_C2H2_sf"/>
</dbReference>
<dbReference type="InterPro" id="IPR013087">
    <property type="entry name" value="Znf_C2H2_type"/>
</dbReference>
<dbReference type="PANTHER" id="PTHR24383">
    <property type="entry name" value="ZINC FINGER PROTEIN"/>
    <property type="match status" value="1"/>
</dbReference>
<dbReference type="PANTHER" id="PTHR24383:SF14">
    <property type="entry name" value="ZINC FINGER PROTEIN 579"/>
    <property type="match status" value="1"/>
</dbReference>
<dbReference type="Pfam" id="PF00096">
    <property type="entry name" value="zf-C2H2"/>
    <property type="match status" value="7"/>
</dbReference>
<dbReference type="SMART" id="SM00355">
    <property type="entry name" value="ZnF_C2H2"/>
    <property type="match status" value="8"/>
</dbReference>
<dbReference type="SUPFAM" id="SSF57667">
    <property type="entry name" value="beta-beta-alpha zinc fingers"/>
    <property type="match status" value="5"/>
</dbReference>
<dbReference type="PROSITE" id="PS00028">
    <property type="entry name" value="ZINC_FINGER_C2H2_1"/>
    <property type="match status" value="8"/>
</dbReference>
<dbReference type="PROSITE" id="PS50157">
    <property type="entry name" value="ZINC_FINGER_C2H2_2"/>
    <property type="match status" value="8"/>
</dbReference>